<feature type="signal peptide" evidence="2">
    <location>
        <begin position="1"/>
        <end position="22"/>
    </location>
</feature>
<feature type="chain" id="PRO_0000030177" description="Receptor activity-modifying protein 3">
    <location>
        <begin position="23"/>
        <end position="147"/>
    </location>
</feature>
<feature type="topological domain" description="Extracellular" evidence="2">
    <location>
        <begin position="23"/>
        <end position="112"/>
    </location>
</feature>
<feature type="transmembrane region" description="Helical" evidence="1">
    <location>
        <begin position="113"/>
        <end position="137"/>
    </location>
</feature>
<feature type="topological domain" description="Cytoplasmic" evidence="2">
    <location>
        <begin position="138"/>
        <end position="147"/>
    </location>
</feature>
<feature type="site" description="Required for CALCRL interaction" evidence="1">
    <location>
        <position position="112"/>
    </location>
</feature>
<feature type="site" description="Required for CALCRL interaction" evidence="1">
    <location>
        <position position="140"/>
    </location>
</feature>
<feature type="glycosylation site" description="N-linked (GlcNAc...) asparagine" evidence="2">
    <location>
        <position position="28"/>
    </location>
</feature>
<feature type="glycosylation site" description="N-linked (GlcNAc...) asparagine" evidence="2">
    <location>
        <position position="57"/>
    </location>
</feature>
<feature type="glycosylation site" description="N-linked (GlcNAc...) asparagine" evidence="2">
    <location>
        <position position="70"/>
    </location>
</feature>
<feature type="glycosylation site" description="N-linked (GlcNAc...) asparagine" evidence="2">
    <location>
        <position position="102"/>
    </location>
</feature>
<feature type="disulfide bond" evidence="1">
    <location>
        <begin position="39"/>
        <end position="71"/>
    </location>
</feature>
<feature type="disulfide bond" evidence="1">
    <location>
        <begin position="56"/>
        <end position="103"/>
    </location>
</feature>
<proteinExistence type="evidence at transcript level"/>
<accession>Q9WUP1</accession>
<accession>Q5SWP4</accession>
<name>RAMP3_MOUSE</name>
<reference key="1">
    <citation type="submission" date="1999-04" db="EMBL/GenBank/DDBJ databases">
        <title>Cloning and sequencing of mouse CGRP/adrenomedullin receptor subunits.</title>
        <authorList>
            <person name="Derst C."/>
            <person name="Preisig-Mueller R."/>
            <person name="Gerhardus J."/>
            <person name="Daut J."/>
        </authorList>
    </citation>
    <scope>NUCLEOTIDE SEQUENCE [MRNA]</scope>
</reference>
<reference key="2">
    <citation type="journal article" date="2000" name="Mol. Cell. Endocrinol.">
        <title>Mouse receptor-activity-modifying proteins 1, -2 and -3: amino acid sequence, expression and function.</title>
        <authorList>
            <person name="Husmann K."/>
            <person name="Sexton P.M."/>
            <person name="Fischer J.A."/>
            <person name="Born W."/>
        </authorList>
    </citation>
    <scope>NUCLEOTIDE SEQUENCE [MRNA]</scope>
    <scope>FUNCTION</scope>
    <scope>TISSUE SPECIFICITY</scope>
</reference>
<reference key="3">
    <citation type="journal article" date="2000" name="Biochem. Biophys. Res. Commun.">
        <title>Decreased gene expression of adrenomedullin receptor in mouse lungs during sepsis.</title>
        <authorList>
            <person name="Ono Y."/>
            <person name="Okano I."/>
            <person name="Kojima M."/>
            <person name="Okada K."/>
            <person name="Kangawa K."/>
        </authorList>
    </citation>
    <scope>NUCLEOTIDE SEQUENCE [MRNA]</scope>
    <scope>TISSUE SPECIFICITY</scope>
    <source>
        <strain>C57BL/6J</strain>
        <tissue>Lung</tissue>
    </source>
</reference>
<reference key="4">
    <citation type="journal article" date="2009" name="PLoS Biol.">
        <title>Lineage-specific biology revealed by a finished genome assembly of the mouse.</title>
        <authorList>
            <person name="Church D.M."/>
            <person name="Goodstadt L."/>
            <person name="Hillier L.W."/>
            <person name="Zody M.C."/>
            <person name="Goldstein S."/>
            <person name="She X."/>
            <person name="Bult C.J."/>
            <person name="Agarwala R."/>
            <person name="Cherry J.L."/>
            <person name="DiCuccio M."/>
            <person name="Hlavina W."/>
            <person name="Kapustin Y."/>
            <person name="Meric P."/>
            <person name="Maglott D."/>
            <person name="Birtle Z."/>
            <person name="Marques A.C."/>
            <person name="Graves T."/>
            <person name="Zhou S."/>
            <person name="Teague B."/>
            <person name="Potamousis K."/>
            <person name="Churas C."/>
            <person name="Place M."/>
            <person name="Herschleb J."/>
            <person name="Runnheim R."/>
            <person name="Forrest D."/>
            <person name="Amos-Landgraf J."/>
            <person name="Schwartz D.C."/>
            <person name="Cheng Z."/>
            <person name="Lindblad-Toh K."/>
            <person name="Eichler E.E."/>
            <person name="Ponting C.P."/>
        </authorList>
    </citation>
    <scope>NUCLEOTIDE SEQUENCE [LARGE SCALE GENOMIC DNA]</scope>
    <source>
        <strain>C57BL/6J</strain>
    </source>
</reference>
<reference key="5">
    <citation type="journal article" date="2004" name="Genome Res.">
        <title>The status, quality, and expansion of the NIH full-length cDNA project: the Mammalian Gene Collection (MGC).</title>
        <authorList>
            <consortium name="The MGC Project Team"/>
        </authorList>
    </citation>
    <scope>NUCLEOTIDE SEQUENCE [LARGE SCALE MRNA]</scope>
    <source>
        <tissue>Eye</tissue>
    </source>
</reference>
<reference key="6">
    <citation type="journal article" date="2013" name="J. Mol. Endocrinol.">
        <title>G-protein-coupled receptor 30 interacts with receptor activity-modifying protein 3 and confers sex-dependent cardioprotection.</title>
        <authorList>
            <person name="Lenhart P.M."/>
            <person name="Broselid S."/>
            <person name="Barrick C.J."/>
            <person name="Leeb-Lundberg L.M."/>
            <person name="Caron K.M."/>
        </authorList>
    </citation>
    <scope>FUNCTION</scope>
    <scope>SUBCELLULAR LOCATION</scope>
</reference>
<sequence length="147" mass="16779">MKTPAQRLHLLPLLLLLCGECAQVCGCNETGMLERLPRCGKAFADMMQKVAVWKWCNLSEFIVYYESFTNCTEMETNIMGCYWPNPLAQSFITGIHRQFFSNCTVDRTHWEDPPDEVLIPLIAVPVVLTVAMAGLVVWRSKHTDRLL</sequence>
<keyword id="KW-1003">Cell membrane</keyword>
<keyword id="KW-1015">Disulfide bond</keyword>
<keyword id="KW-0325">Glycoprotein</keyword>
<keyword id="KW-0472">Membrane</keyword>
<keyword id="KW-0675">Receptor</keyword>
<keyword id="KW-1185">Reference proteome</keyword>
<keyword id="KW-0732">Signal</keyword>
<keyword id="KW-0812">Transmembrane</keyword>
<keyword id="KW-1133">Transmembrane helix</keyword>
<keyword id="KW-0813">Transport</keyword>
<gene>
    <name evidence="7" type="primary">Ramp3</name>
</gene>
<evidence type="ECO:0000250" key="1">
    <source>
        <dbReference type="UniProtKB" id="O60896"/>
    </source>
</evidence>
<evidence type="ECO:0000255" key="2"/>
<evidence type="ECO:0000269" key="3">
    <source>
    </source>
</evidence>
<evidence type="ECO:0000269" key="4">
    <source>
    </source>
</evidence>
<evidence type="ECO:0000269" key="5">
    <source>
    </source>
</evidence>
<evidence type="ECO:0000305" key="6"/>
<evidence type="ECO:0000312" key="7">
    <source>
        <dbReference type="MGI" id="MGI:1860292"/>
    </source>
</evidence>
<protein>
    <recommendedName>
        <fullName>Receptor activity-modifying protein 3</fullName>
    </recommendedName>
</protein>
<comment type="function">
    <text evidence="1 4 5">Accessory protein that interacts with and modulates the function of G-protein coupled receptors including calcitonin gene-related peptide type 1 receptor (CALCRL), calcitonin receptor (CALCR) and G-protein coupled estrogen receptor 1 (GPER1) (PubMed:10854696, PubMed:23674134). Required for the transport of CALCRL and GPER1 receptors to the plasma membrane (By similarity). Plays a role in cardioprotection by reducing cardiac hypertrophy and perivascular fibrosis in a GPER1-dependent manner (PubMed:23674134). Together with CALCRL, form a receptor complex for adrenomedullin/ADM and intermedin/ADM2 (PubMed:10854696). Together with CALCR, act as a receptor complex for amylin/IAPP (By similarity).</text>
</comment>
<comment type="subunit">
    <text evidence="1">Heterodimer of CALCRL and RAMP3; interaction induces allosteric modulation of CALCRL function and ligand specificity for adrenomedullin/ADM and intermedin/ADM2. Heterodimer of CALCR and RAMP3; interaction form the receptor complex AMYR3 for amylin/IAPP (By similarity). Interacts with GPER1 (By similarity).</text>
</comment>
<comment type="subcellular location">
    <subcellularLocation>
        <location evidence="5">Cell membrane</location>
        <topology evidence="1">Single-pass type I membrane protein</topology>
    </subcellularLocation>
    <subcellularLocation>
        <location evidence="1">Membrane</location>
        <topology evidence="1">Single-pass type I membrane protein</topology>
    </subcellularLocation>
    <text evidence="1">Moves from intracellular puncta to the plasma membrane in a RAMP3-dependent manner.</text>
</comment>
<comment type="tissue specificity">
    <text evidence="3 4">Expressed predominantly in the testis, embryonic and adult brain and in kidney.</text>
</comment>
<comment type="similarity">
    <text evidence="6">Belongs to the RAMP family.</text>
</comment>
<dbReference type="EMBL" id="AF146524">
    <property type="protein sequence ID" value="AAD35020.1"/>
    <property type="molecule type" value="mRNA"/>
</dbReference>
<dbReference type="EMBL" id="AJ250491">
    <property type="protein sequence ID" value="CAB59513.1"/>
    <property type="molecule type" value="mRNA"/>
</dbReference>
<dbReference type="EMBL" id="AF209907">
    <property type="protein sequence ID" value="AAF21039.1"/>
    <property type="molecule type" value="mRNA"/>
</dbReference>
<dbReference type="EMBL" id="AL603787">
    <property type="status" value="NOT_ANNOTATED_CDS"/>
    <property type="molecule type" value="Genomic_DNA"/>
</dbReference>
<dbReference type="EMBL" id="BC024765">
    <property type="protein sequence ID" value="AAH24765.1"/>
    <property type="molecule type" value="mRNA"/>
</dbReference>
<dbReference type="CCDS" id="CCDS24425.1"/>
<dbReference type="PIR" id="JC7263">
    <property type="entry name" value="JC7263"/>
</dbReference>
<dbReference type="RefSeq" id="NP_062384.1">
    <property type="nucleotide sequence ID" value="NM_019511.3"/>
</dbReference>
<dbReference type="SMR" id="Q9WUP1"/>
<dbReference type="ComplexPortal" id="CPX-3151">
    <property type="entry name" value="Adrenomedullin receptor AM2 complex"/>
</dbReference>
<dbReference type="ComplexPortal" id="CPX-3237">
    <property type="entry name" value="Amylin receptor 3 complex"/>
</dbReference>
<dbReference type="FunCoup" id="Q9WUP1">
    <property type="interactions" value="14"/>
</dbReference>
<dbReference type="STRING" id="10090.ENSMUSP00000047518"/>
<dbReference type="GuidetoPHARMACOLOGY" id="53"/>
<dbReference type="GlyCosmos" id="Q9WUP1">
    <property type="glycosylation" value="4 sites, No reported glycans"/>
</dbReference>
<dbReference type="GlyGen" id="Q9WUP1">
    <property type="glycosylation" value="4 sites, 1 N-linked glycan (1 site)"/>
</dbReference>
<dbReference type="PhosphoSitePlus" id="Q9WUP1"/>
<dbReference type="PaxDb" id="10090-ENSMUSP00000047518"/>
<dbReference type="ProteomicsDB" id="253170"/>
<dbReference type="Antibodypedia" id="27450">
    <property type="antibodies" value="214 antibodies from 33 providers"/>
</dbReference>
<dbReference type="DNASU" id="56089"/>
<dbReference type="Ensembl" id="ENSMUST00000045374.8">
    <property type="protein sequence ID" value="ENSMUSP00000047518.8"/>
    <property type="gene ID" value="ENSMUSG00000041046.8"/>
</dbReference>
<dbReference type="GeneID" id="56089"/>
<dbReference type="KEGG" id="mmu:56089"/>
<dbReference type="UCSC" id="uc007hzd.1">
    <property type="organism name" value="mouse"/>
</dbReference>
<dbReference type="AGR" id="MGI:1860292"/>
<dbReference type="CTD" id="10268"/>
<dbReference type="MGI" id="MGI:1860292">
    <property type="gene designation" value="Ramp3"/>
</dbReference>
<dbReference type="VEuPathDB" id="HostDB:ENSMUSG00000041046"/>
<dbReference type="eggNOG" id="ENOG502S3C2">
    <property type="taxonomic scope" value="Eukaryota"/>
</dbReference>
<dbReference type="GeneTree" id="ENSGT00940000161026"/>
<dbReference type="HOGENOM" id="CLU_116349_3_1_1"/>
<dbReference type="InParanoid" id="Q9WUP1"/>
<dbReference type="OMA" id="VAVWKWC"/>
<dbReference type="OrthoDB" id="9940331at2759"/>
<dbReference type="PhylomeDB" id="Q9WUP1"/>
<dbReference type="TreeFam" id="TF333286"/>
<dbReference type="Reactome" id="R-MMU-418555">
    <property type="pathway name" value="G alpha (s) signalling events"/>
</dbReference>
<dbReference type="Reactome" id="R-MMU-419812">
    <property type="pathway name" value="Calcitonin-like ligand receptors"/>
</dbReference>
<dbReference type="BioGRID-ORCS" id="56089">
    <property type="hits" value="3 hits in 77 CRISPR screens"/>
</dbReference>
<dbReference type="PRO" id="PR:Q9WUP1"/>
<dbReference type="Proteomes" id="UP000000589">
    <property type="component" value="Chromosome 11"/>
</dbReference>
<dbReference type="RNAct" id="Q9WUP1">
    <property type="molecule type" value="protein"/>
</dbReference>
<dbReference type="Bgee" id="ENSMUSG00000041046">
    <property type="expression patterns" value="Expressed in medial dorsal nucleus of thalamus and 129 other cell types or tissues"/>
</dbReference>
<dbReference type="GO" id="GO:1903143">
    <property type="term" value="C:adrenomedullin receptor complex"/>
    <property type="evidence" value="ECO:0007669"/>
    <property type="project" value="Ensembl"/>
</dbReference>
<dbReference type="GO" id="GO:0150058">
    <property type="term" value="C:amylin receptor complex 3"/>
    <property type="evidence" value="ECO:0007669"/>
    <property type="project" value="Ensembl"/>
</dbReference>
<dbReference type="GO" id="GO:0009986">
    <property type="term" value="C:cell surface"/>
    <property type="evidence" value="ECO:0007669"/>
    <property type="project" value="Ensembl"/>
</dbReference>
<dbReference type="GO" id="GO:0005764">
    <property type="term" value="C:lysosome"/>
    <property type="evidence" value="ECO:0007669"/>
    <property type="project" value="Ensembl"/>
</dbReference>
<dbReference type="GO" id="GO:0005886">
    <property type="term" value="C:plasma membrane"/>
    <property type="evidence" value="ECO:0000314"/>
    <property type="project" value="UniProtKB"/>
</dbReference>
<dbReference type="GO" id="GO:0001605">
    <property type="term" value="F:adrenomedullin receptor activity"/>
    <property type="evidence" value="ECO:0007669"/>
    <property type="project" value="Ensembl"/>
</dbReference>
<dbReference type="GO" id="GO:0097643">
    <property type="term" value="F:amylin receptor activity"/>
    <property type="evidence" value="ECO:0007669"/>
    <property type="project" value="Ensembl"/>
</dbReference>
<dbReference type="GO" id="GO:0015026">
    <property type="term" value="F:coreceptor activity"/>
    <property type="evidence" value="ECO:0000314"/>
    <property type="project" value="MGI"/>
</dbReference>
<dbReference type="GO" id="GO:0007189">
    <property type="term" value="P:adenylate cyclase-activating G protein-coupled receptor signaling pathway"/>
    <property type="evidence" value="ECO:0007669"/>
    <property type="project" value="Ensembl"/>
</dbReference>
<dbReference type="GO" id="GO:1990410">
    <property type="term" value="P:adrenomedullin receptor signaling pathway"/>
    <property type="evidence" value="ECO:0007669"/>
    <property type="project" value="Ensembl"/>
</dbReference>
<dbReference type="GO" id="GO:0150061">
    <property type="term" value="P:amylin receptor 3 signaling pathway"/>
    <property type="evidence" value="ECO:0007669"/>
    <property type="project" value="Ensembl"/>
</dbReference>
<dbReference type="GO" id="GO:0006816">
    <property type="term" value="P:calcium ion transport"/>
    <property type="evidence" value="ECO:0007669"/>
    <property type="project" value="Ensembl"/>
</dbReference>
<dbReference type="GO" id="GO:0071392">
    <property type="term" value="P:cellular response to estradiol stimulus"/>
    <property type="evidence" value="ECO:0000314"/>
    <property type="project" value="UniProtKB"/>
</dbReference>
<dbReference type="GO" id="GO:0007186">
    <property type="term" value="P:G protein-coupled receptor signaling pathway"/>
    <property type="evidence" value="ECO:0000353"/>
    <property type="project" value="MGI"/>
</dbReference>
<dbReference type="GO" id="GO:0086103">
    <property type="term" value="P:G protein-coupled receptor signaling pathway involved in heart process"/>
    <property type="evidence" value="ECO:0000315"/>
    <property type="project" value="UniProtKB"/>
</dbReference>
<dbReference type="GO" id="GO:0006886">
    <property type="term" value="P:intracellular protein transport"/>
    <property type="evidence" value="ECO:0007669"/>
    <property type="project" value="InterPro"/>
</dbReference>
<dbReference type="GO" id="GO:0050850">
    <property type="term" value="P:positive regulation of calcium-mediated signaling"/>
    <property type="evidence" value="ECO:0007669"/>
    <property type="project" value="Ensembl"/>
</dbReference>
<dbReference type="GO" id="GO:0141163">
    <property type="term" value="P:positive regulation of cAMP/PKA signal transduction"/>
    <property type="evidence" value="ECO:0007669"/>
    <property type="project" value="Ensembl"/>
</dbReference>
<dbReference type="GO" id="GO:0070374">
    <property type="term" value="P:positive regulation of ERK1 and ERK2 cascade"/>
    <property type="evidence" value="ECO:0007669"/>
    <property type="project" value="Ensembl"/>
</dbReference>
<dbReference type="GO" id="GO:0010628">
    <property type="term" value="P:positive regulation of gene expression"/>
    <property type="evidence" value="ECO:0007669"/>
    <property type="project" value="Ensembl"/>
</dbReference>
<dbReference type="GO" id="GO:0051897">
    <property type="term" value="P:positive regulation of phosphatidylinositol 3-kinase/protein kinase B signal transduction"/>
    <property type="evidence" value="ECO:0007669"/>
    <property type="project" value="Ensembl"/>
</dbReference>
<dbReference type="GO" id="GO:1903078">
    <property type="term" value="P:positive regulation of protein localization to plasma membrane"/>
    <property type="evidence" value="ECO:0000250"/>
    <property type="project" value="UniProtKB"/>
</dbReference>
<dbReference type="GO" id="GO:0001921">
    <property type="term" value="P:positive regulation of receptor recycling"/>
    <property type="evidence" value="ECO:0007669"/>
    <property type="project" value="Ensembl"/>
</dbReference>
<dbReference type="GO" id="GO:0072659">
    <property type="term" value="P:protein localization to plasma membrane"/>
    <property type="evidence" value="ECO:0007669"/>
    <property type="project" value="Ensembl"/>
</dbReference>
<dbReference type="GO" id="GO:0031623">
    <property type="term" value="P:receptor internalization"/>
    <property type="evidence" value="ECO:0007669"/>
    <property type="project" value="Ensembl"/>
</dbReference>
<dbReference type="GO" id="GO:0008277">
    <property type="term" value="P:regulation of G protein-coupled receptor signaling pathway"/>
    <property type="evidence" value="ECO:0007669"/>
    <property type="project" value="InterPro"/>
</dbReference>
<dbReference type="GO" id="GO:1904645">
    <property type="term" value="P:response to amyloid-beta"/>
    <property type="evidence" value="ECO:0007669"/>
    <property type="project" value="Ensembl"/>
</dbReference>
<dbReference type="FunFam" id="1.10.150.510:FF:000001">
    <property type="entry name" value="Receptor activity modifying protein 3"/>
    <property type="match status" value="1"/>
</dbReference>
<dbReference type="Gene3D" id="1.10.150.510">
    <property type="entry name" value="Receptor activity modifying family"/>
    <property type="match status" value="1"/>
</dbReference>
<dbReference type="InterPro" id="IPR006985">
    <property type="entry name" value="RAMP"/>
</dbReference>
<dbReference type="InterPro" id="IPR038126">
    <property type="entry name" value="RAMP_sf"/>
</dbReference>
<dbReference type="PANTHER" id="PTHR14076">
    <property type="entry name" value="RECEPTOR ACTIVITY MODIFYING PROTEIN RAMP"/>
    <property type="match status" value="1"/>
</dbReference>
<dbReference type="PANTHER" id="PTHR14076:SF2">
    <property type="entry name" value="RECEPTOR ACTIVITY-MODIFYING PROTEIN 3"/>
    <property type="match status" value="1"/>
</dbReference>
<dbReference type="Pfam" id="PF04901">
    <property type="entry name" value="RAMP"/>
    <property type="match status" value="1"/>
</dbReference>
<organism>
    <name type="scientific">Mus musculus</name>
    <name type="common">Mouse</name>
    <dbReference type="NCBI Taxonomy" id="10090"/>
    <lineage>
        <taxon>Eukaryota</taxon>
        <taxon>Metazoa</taxon>
        <taxon>Chordata</taxon>
        <taxon>Craniata</taxon>
        <taxon>Vertebrata</taxon>
        <taxon>Euteleostomi</taxon>
        <taxon>Mammalia</taxon>
        <taxon>Eutheria</taxon>
        <taxon>Euarchontoglires</taxon>
        <taxon>Glires</taxon>
        <taxon>Rodentia</taxon>
        <taxon>Myomorpha</taxon>
        <taxon>Muroidea</taxon>
        <taxon>Muridae</taxon>
        <taxon>Murinae</taxon>
        <taxon>Mus</taxon>
        <taxon>Mus</taxon>
    </lineage>
</organism>